<reference key="1">
    <citation type="journal article" date="2002" name="Nucleic Acids Res.">
        <title>Genome sequence of Shigella flexneri 2a: insights into pathogenicity through comparison with genomes of Escherichia coli K12 and O157.</title>
        <authorList>
            <person name="Jin Q."/>
            <person name="Yuan Z."/>
            <person name="Xu J."/>
            <person name="Wang Y."/>
            <person name="Shen Y."/>
            <person name="Lu W."/>
            <person name="Wang J."/>
            <person name="Liu H."/>
            <person name="Yang J."/>
            <person name="Yang F."/>
            <person name="Zhang X."/>
            <person name="Zhang J."/>
            <person name="Yang G."/>
            <person name="Wu H."/>
            <person name="Qu D."/>
            <person name="Dong J."/>
            <person name="Sun L."/>
            <person name="Xue Y."/>
            <person name="Zhao A."/>
            <person name="Gao Y."/>
            <person name="Zhu J."/>
            <person name="Kan B."/>
            <person name="Ding K."/>
            <person name="Chen S."/>
            <person name="Cheng H."/>
            <person name="Yao Z."/>
            <person name="He B."/>
            <person name="Chen R."/>
            <person name="Ma D."/>
            <person name="Qiang B."/>
            <person name="Wen Y."/>
            <person name="Hou Y."/>
            <person name="Yu J."/>
        </authorList>
    </citation>
    <scope>NUCLEOTIDE SEQUENCE [LARGE SCALE GENOMIC DNA]</scope>
    <source>
        <strain>301 / Serotype 2a</strain>
    </source>
</reference>
<reference key="2">
    <citation type="journal article" date="2003" name="Infect. Immun.">
        <title>Complete genome sequence and comparative genomics of Shigella flexneri serotype 2a strain 2457T.</title>
        <authorList>
            <person name="Wei J."/>
            <person name="Goldberg M.B."/>
            <person name="Burland V."/>
            <person name="Venkatesan M.M."/>
            <person name="Deng W."/>
            <person name="Fournier G."/>
            <person name="Mayhew G.F."/>
            <person name="Plunkett G. III"/>
            <person name="Rose D.J."/>
            <person name="Darling A."/>
            <person name="Mau B."/>
            <person name="Perna N.T."/>
            <person name="Payne S.M."/>
            <person name="Runyen-Janecky L.J."/>
            <person name="Zhou S."/>
            <person name="Schwartz D.C."/>
            <person name="Blattner F.R."/>
        </authorList>
    </citation>
    <scope>NUCLEOTIDE SEQUENCE [LARGE SCALE GENOMIC DNA]</scope>
    <source>
        <strain>ATCC 700930 / 2457T / Serotype 2a</strain>
    </source>
</reference>
<keyword id="KW-0012">Acyltransferase</keyword>
<keyword id="KW-0997">Cell inner membrane</keyword>
<keyword id="KW-1003">Cell membrane</keyword>
<keyword id="KW-0448">Lipopolysaccharide biosynthesis</keyword>
<keyword id="KW-0472">Membrane</keyword>
<keyword id="KW-1185">Reference proteome</keyword>
<keyword id="KW-0808">Transferase</keyword>
<keyword id="KW-0812">Transmembrane</keyword>
<keyword id="KW-1133">Transmembrane helix</keyword>
<sequence length="306" mass="35493">MFPQCKFSREFLHPRYWLTWFGLGVLWLWVQLPYPVLCFLGTRIGAMARPFLKRRESIARKNLELCFPQHSAEEREKMIAENFRSLGMALVETGMAWFWPDSRVRKWFDVEGLDNLKRAQMQNRGVMVVGVHFMSLELGGRVMGLCQPMMATYRPHNNQLMEWVQTRGRMRSNKAMIGRNNLRGIVGALKKGEAVWFAPDQDYGRKGSSFAPFFAVENVATTNGTYVLSRLSGAAMLTVTMVRKADYSGYRLFITPEMEGYPTDENQAAAYMNKIIEKEIMRAPEQYLWIHRRFKTRPVGESSLYI</sequence>
<proteinExistence type="inferred from homology"/>
<evidence type="ECO:0000255" key="1">
    <source>
        <dbReference type="HAMAP-Rule" id="MF_01943"/>
    </source>
</evidence>
<evidence type="ECO:0000305" key="2"/>
<organism>
    <name type="scientific">Shigella flexneri</name>
    <dbReference type="NCBI Taxonomy" id="623"/>
    <lineage>
        <taxon>Bacteria</taxon>
        <taxon>Pseudomonadati</taxon>
        <taxon>Pseudomonadota</taxon>
        <taxon>Gammaproteobacteria</taxon>
        <taxon>Enterobacterales</taxon>
        <taxon>Enterobacteriaceae</taxon>
        <taxon>Shigella</taxon>
    </lineage>
</organism>
<gene>
    <name evidence="1" type="primary">lpxP</name>
    <name type="synonym">ddg</name>
    <name type="ordered locus">SF2444</name>
    <name type="ordered locus">S2582</name>
</gene>
<comment type="function">
    <text evidence="1">Catalyzes the transfer of an acyl chain from an acyl-[acyl-carrier-protein] (ACP) to Kdo(2)-lipid IV(A) to form Kdo(2)-(acyl)-lipid IV(A).</text>
</comment>
<comment type="catalytic activity">
    <reaction evidence="1">
        <text>an alpha-Kdo-(2-&gt;4)-alpha-Kdo-(2-&gt;6)-lipid IVA + a fatty acyl-[ACP] = an acyl-alpha-Kdo-(2-&gt;4)-alpha-Kdo-(2-&gt;6)-lipid IVA + holo-[ACP]</text>
        <dbReference type="Rhea" id="RHEA:74287"/>
        <dbReference type="Rhea" id="RHEA-COMP:9685"/>
        <dbReference type="Rhea" id="RHEA-COMP:14125"/>
        <dbReference type="ChEBI" id="CHEBI:64479"/>
        <dbReference type="ChEBI" id="CHEBI:138651"/>
        <dbReference type="ChEBI" id="CHEBI:176429"/>
        <dbReference type="ChEBI" id="CHEBI:193149"/>
        <dbReference type="EC" id="2.3.1.242"/>
    </reaction>
</comment>
<comment type="pathway">
    <text evidence="1">Bacterial outer membrane biogenesis; lipopolysaccharide biosynthesis.</text>
</comment>
<comment type="subcellular location">
    <subcellularLocation>
        <location evidence="1">Cell inner membrane</location>
        <topology evidence="1">Single-pass membrane protein</topology>
    </subcellularLocation>
</comment>
<comment type="similarity">
    <text evidence="1">Belongs to the LpxL/LpxM/LpxP family. LpxP subfamily.</text>
</comment>
<comment type="sequence caution" evidence="2">
    <conflict type="erroneous initiation">
        <sequence resource="EMBL-CDS" id="AAN43955"/>
    </conflict>
    <text>Extended N-terminus.</text>
</comment>
<comment type="sequence caution" evidence="2">
    <conflict type="erroneous initiation">
        <sequence resource="EMBL-CDS" id="AAP17765"/>
    </conflict>
    <text>Extended N-terminus.</text>
</comment>
<accession>P0ACV3</accession>
<accession>P76522</accession>
<accession>P76949</accession>
<protein>
    <recommendedName>
        <fullName evidence="1">Lipid A biosynthesis acyltransferase</fullName>
        <ecNumber evidence="1">2.3.1.242</ecNumber>
    </recommendedName>
    <alternativeName>
        <fullName evidence="1">Kdo(2)-lipid IV(A) acyltransferase</fullName>
    </alternativeName>
</protein>
<name>LPXP_SHIFL</name>
<feature type="chain" id="PRO_0000201782" description="Lipid A biosynthesis acyltransferase">
    <location>
        <begin position="1"/>
        <end position="306"/>
    </location>
</feature>
<feature type="transmembrane region" description="Helical" evidence="1">
    <location>
        <begin position="20"/>
        <end position="40"/>
    </location>
</feature>
<feature type="short sequence motif" description="HXXXXD motif" evidence="1">
    <location>
        <begin position="132"/>
        <end position="137"/>
    </location>
</feature>
<dbReference type="EC" id="2.3.1.242" evidence="1"/>
<dbReference type="EMBL" id="AE005674">
    <property type="protein sequence ID" value="AAN43955.1"/>
    <property type="status" value="ALT_INIT"/>
    <property type="molecule type" value="Genomic_DNA"/>
</dbReference>
<dbReference type="EMBL" id="AE014073">
    <property type="protein sequence ID" value="AAP17765.1"/>
    <property type="status" value="ALT_INIT"/>
    <property type="molecule type" value="Genomic_DNA"/>
</dbReference>
<dbReference type="RefSeq" id="NP_708248.3">
    <property type="nucleotide sequence ID" value="NC_004337.2"/>
</dbReference>
<dbReference type="RefSeq" id="WP_000484404.1">
    <property type="nucleotide sequence ID" value="NZ_WPGW01000027.1"/>
</dbReference>
<dbReference type="SMR" id="P0ACV3"/>
<dbReference type="STRING" id="198214.SF2444"/>
<dbReference type="PaxDb" id="198214-SF2444"/>
<dbReference type="GeneID" id="1023448"/>
<dbReference type="GeneID" id="75202553"/>
<dbReference type="KEGG" id="sfl:SF2444"/>
<dbReference type="KEGG" id="sfx:S2582"/>
<dbReference type="PATRIC" id="fig|198214.7.peg.2918"/>
<dbReference type="HOGENOM" id="CLU_049421_1_0_6"/>
<dbReference type="UniPathway" id="UPA00030"/>
<dbReference type="Proteomes" id="UP000001006">
    <property type="component" value="Chromosome"/>
</dbReference>
<dbReference type="Proteomes" id="UP000002673">
    <property type="component" value="Chromosome"/>
</dbReference>
<dbReference type="GO" id="GO:0005886">
    <property type="term" value="C:plasma membrane"/>
    <property type="evidence" value="ECO:0007669"/>
    <property type="project" value="UniProtKB-SubCell"/>
</dbReference>
<dbReference type="GO" id="GO:0008951">
    <property type="term" value="F:palmitoleoyl [acyl-carrier-protein]-dependent acyltransferase activity"/>
    <property type="evidence" value="ECO:0007669"/>
    <property type="project" value="InterPro"/>
</dbReference>
<dbReference type="GO" id="GO:0036104">
    <property type="term" value="P:Kdo2-lipid A biosynthetic process"/>
    <property type="evidence" value="ECO:0007669"/>
    <property type="project" value="UniProtKB-UniRule"/>
</dbReference>
<dbReference type="GO" id="GO:0009245">
    <property type="term" value="P:lipid A biosynthetic process"/>
    <property type="evidence" value="ECO:0007669"/>
    <property type="project" value="InterPro"/>
</dbReference>
<dbReference type="GO" id="GO:0009103">
    <property type="term" value="P:lipopolysaccharide biosynthetic process"/>
    <property type="evidence" value="ECO:0007669"/>
    <property type="project" value="UniProtKB-UniRule"/>
</dbReference>
<dbReference type="GO" id="GO:0009409">
    <property type="term" value="P:response to cold"/>
    <property type="evidence" value="ECO:0007669"/>
    <property type="project" value="InterPro"/>
</dbReference>
<dbReference type="CDD" id="cd07984">
    <property type="entry name" value="LPLAT_LABLAT-like"/>
    <property type="match status" value="1"/>
</dbReference>
<dbReference type="HAMAP" id="MF_01942">
    <property type="entry name" value="Lipid_A_LpxL_LpxP"/>
    <property type="match status" value="1"/>
</dbReference>
<dbReference type="HAMAP" id="MF_01943">
    <property type="entry name" value="Lipid_A_LpxP"/>
    <property type="match status" value="1"/>
</dbReference>
<dbReference type="InterPro" id="IPR004960">
    <property type="entry name" value="LipA_acyltrans"/>
</dbReference>
<dbReference type="InterPro" id="IPR011920">
    <property type="entry name" value="Lipid_A_LpxL_LpxP"/>
</dbReference>
<dbReference type="InterPro" id="IPR030857">
    <property type="entry name" value="Lipid_A_LpxP"/>
</dbReference>
<dbReference type="NCBIfam" id="TIGR02207">
    <property type="entry name" value="lipid_A_htrB"/>
    <property type="match status" value="1"/>
</dbReference>
<dbReference type="NCBIfam" id="NF005340">
    <property type="entry name" value="PRK06860.1"/>
    <property type="match status" value="1"/>
</dbReference>
<dbReference type="NCBIfam" id="NF005952">
    <property type="entry name" value="PRK08025.1"/>
    <property type="match status" value="1"/>
</dbReference>
<dbReference type="PANTHER" id="PTHR30606">
    <property type="entry name" value="LIPID A BIOSYNTHESIS LAUROYL ACYLTRANSFERASE"/>
    <property type="match status" value="1"/>
</dbReference>
<dbReference type="PANTHER" id="PTHR30606:SF7">
    <property type="entry name" value="LIPID A BIOSYNTHESIS PALMITOLEOYLTRANSFERASE"/>
    <property type="match status" value="1"/>
</dbReference>
<dbReference type="Pfam" id="PF03279">
    <property type="entry name" value="Lip_A_acyltrans"/>
    <property type="match status" value="1"/>
</dbReference>
<dbReference type="PIRSF" id="PIRSF026649">
    <property type="entry name" value="MsbB"/>
    <property type="match status" value="1"/>
</dbReference>